<comment type="function">
    <text evidence="1">Catalyzes the last two sequential reactions in the de novo biosynthetic pathway for UDP-N-acetylglucosamine (UDP-GlcNAc). The C-terminal domain catalyzes the transfer of acetyl group from acetyl coenzyme A to glucosamine-1-phosphate (GlcN-1-P) to produce N-acetylglucosamine-1-phosphate (GlcNAc-1-P), which is converted into UDP-GlcNAc by the transfer of uridine 5-monophosphate (from uridine 5-triphosphate), a reaction catalyzed by the N-terminal domain.</text>
</comment>
<comment type="catalytic activity">
    <reaction evidence="1">
        <text>alpha-D-glucosamine 1-phosphate + acetyl-CoA = N-acetyl-alpha-D-glucosamine 1-phosphate + CoA + H(+)</text>
        <dbReference type="Rhea" id="RHEA:13725"/>
        <dbReference type="ChEBI" id="CHEBI:15378"/>
        <dbReference type="ChEBI" id="CHEBI:57287"/>
        <dbReference type="ChEBI" id="CHEBI:57288"/>
        <dbReference type="ChEBI" id="CHEBI:57776"/>
        <dbReference type="ChEBI" id="CHEBI:58516"/>
        <dbReference type="EC" id="2.3.1.157"/>
    </reaction>
</comment>
<comment type="catalytic activity">
    <reaction evidence="1">
        <text>N-acetyl-alpha-D-glucosamine 1-phosphate + UTP + H(+) = UDP-N-acetyl-alpha-D-glucosamine + diphosphate</text>
        <dbReference type="Rhea" id="RHEA:13509"/>
        <dbReference type="ChEBI" id="CHEBI:15378"/>
        <dbReference type="ChEBI" id="CHEBI:33019"/>
        <dbReference type="ChEBI" id="CHEBI:46398"/>
        <dbReference type="ChEBI" id="CHEBI:57705"/>
        <dbReference type="ChEBI" id="CHEBI:57776"/>
        <dbReference type="EC" id="2.7.7.23"/>
    </reaction>
</comment>
<comment type="cofactor">
    <cofactor evidence="1">
        <name>Mg(2+)</name>
        <dbReference type="ChEBI" id="CHEBI:18420"/>
    </cofactor>
    <text evidence="1">Binds 1 Mg(2+) ion per subunit.</text>
</comment>
<comment type="pathway">
    <text evidence="1">Nucleotide-sugar biosynthesis; UDP-N-acetyl-alpha-D-glucosamine biosynthesis; N-acetyl-alpha-D-glucosamine 1-phosphate from alpha-D-glucosamine 6-phosphate (route II): step 2/2.</text>
</comment>
<comment type="pathway">
    <text evidence="1">Nucleotide-sugar biosynthesis; UDP-N-acetyl-alpha-D-glucosamine biosynthesis; UDP-N-acetyl-alpha-D-glucosamine from N-acetyl-alpha-D-glucosamine 1-phosphate: step 1/1.</text>
</comment>
<comment type="pathway">
    <text evidence="1">Bacterial outer membrane biogenesis; LPS lipid A biosynthesis.</text>
</comment>
<comment type="subunit">
    <text evidence="1">Homotrimer.</text>
</comment>
<comment type="subcellular location">
    <subcellularLocation>
        <location evidence="1">Cytoplasm</location>
    </subcellularLocation>
</comment>
<comment type="similarity">
    <text evidence="1">In the N-terminal section; belongs to the N-acetylglucosamine-1-phosphate uridyltransferase family.</text>
</comment>
<comment type="similarity">
    <text evidence="1">In the C-terminal section; belongs to the transferase hexapeptide repeat family.</text>
</comment>
<evidence type="ECO:0000255" key="1">
    <source>
        <dbReference type="HAMAP-Rule" id="MF_01631"/>
    </source>
</evidence>
<accession>B1LL57</accession>
<keyword id="KW-0012">Acyltransferase</keyword>
<keyword id="KW-0133">Cell shape</keyword>
<keyword id="KW-0961">Cell wall biogenesis/degradation</keyword>
<keyword id="KW-0963">Cytoplasm</keyword>
<keyword id="KW-0460">Magnesium</keyword>
<keyword id="KW-0479">Metal-binding</keyword>
<keyword id="KW-0511">Multifunctional enzyme</keyword>
<keyword id="KW-0548">Nucleotidyltransferase</keyword>
<keyword id="KW-0573">Peptidoglycan synthesis</keyword>
<keyword id="KW-0677">Repeat</keyword>
<keyword id="KW-0808">Transferase</keyword>
<proteinExistence type="inferred from homology"/>
<dbReference type="EC" id="2.7.7.23" evidence="1"/>
<dbReference type="EC" id="2.3.1.157" evidence="1"/>
<dbReference type="EMBL" id="CP000970">
    <property type="protein sequence ID" value="ACB15650.1"/>
    <property type="molecule type" value="Genomic_DNA"/>
</dbReference>
<dbReference type="RefSeq" id="WP_000933736.1">
    <property type="nucleotide sequence ID" value="NC_010498.1"/>
</dbReference>
<dbReference type="SMR" id="B1LL57"/>
<dbReference type="GeneID" id="75205448"/>
<dbReference type="KEGG" id="ecm:EcSMS35_4098"/>
<dbReference type="HOGENOM" id="CLU_029499_15_2_6"/>
<dbReference type="UniPathway" id="UPA00113">
    <property type="reaction ID" value="UER00532"/>
</dbReference>
<dbReference type="UniPathway" id="UPA00113">
    <property type="reaction ID" value="UER00533"/>
</dbReference>
<dbReference type="UniPathway" id="UPA00973"/>
<dbReference type="Proteomes" id="UP000007011">
    <property type="component" value="Chromosome"/>
</dbReference>
<dbReference type="GO" id="GO:0005737">
    <property type="term" value="C:cytoplasm"/>
    <property type="evidence" value="ECO:0007669"/>
    <property type="project" value="UniProtKB-SubCell"/>
</dbReference>
<dbReference type="GO" id="GO:0016020">
    <property type="term" value="C:membrane"/>
    <property type="evidence" value="ECO:0007669"/>
    <property type="project" value="GOC"/>
</dbReference>
<dbReference type="GO" id="GO:0019134">
    <property type="term" value="F:glucosamine-1-phosphate N-acetyltransferase activity"/>
    <property type="evidence" value="ECO:0007669"/>
    <property type="project" value="UniProtKB-UniRule"/>
</dbReference>
<dbReference type="GO" id="GO:0000287">
    <property type="term" value="F:magnesium ion binding"/>
    <property type="evidence" value="ECO:0007669"/>
    <property type="project" value="UniProtKB-UniRule"/>
</dbReference>
<dbReference type="GO" id="GO:0003977">
    <property type="term" value="F:UDP-N-acetylglucosamine diphosphorylase activity"/>
    <property type="evidence" value="ECO:0007669"/>
    <property type="project" value="UniProtKB-UniRule"/>
</dbReference>
<dbReference type="GO" id="GO:0000902">
    <property type="term" value="P:cell morphogenesis"/>
    <property type="evidence" value="ECO:0007669"/>
    <property type="project" value="UniProtKB-UniRule"/>
</dbReference>
<dbReference type="GO" id="GO:0071555">
    <property type="term" value="P:cell wall organization"/>
    <property type="evidence" value="ECO:0007669"/>
    <property type="project" value="UniProtKB-KW"/>
</dbReference>
<dbReference type="GO" id="GO:0009245">
    <property type="term" value="P:lipid A biosynthetic process"/>
    <property type="evidence" value="ECO:0007669"/>
    <property type="project" value="UniProtKB-UniRule"/>
</dbReference>
<dbReference type="GO" id="GO:0009252">
    <property type="term" value="P:peptidoglycan biosynthetic process"/>
    <property type="evidence" value="ECO:0007669"/>
    <property type="project" value="UniProtKB-UniRule"/>
</dbReference>
<dbReference type="GO" id="GO:0008360">
    <property type="term" value="P:regulation of cell shape"/>
    <property type="evidence" value="ECO:0007669"/>
    <property type="project" value="UniProtKB-KW"/>
</dbReference>
<dbReference type="GO" id="GO:0006048">
    <property type="term" value="P:UDP-N-acetylglucosamine biosynthetic process"/>
    <property type="evidence" value="ECO:0007669"/>
    <property type="project" value="UniProtKB-UniPathway"/>
</dbReference>
<dbReference type="CDD" id="cd02540">
    <property type="entry name" value="GT2_GlmU_N_bac"/>
    <property type="match status" value="1"/>
</dbReference>
<dbReference type="CDD" id="cd03353">
    <property type="entry name" value="LbH_GlmU_C"/>
    <property type="match status" value="1"/>
</dbReference>
<dbReference type="FunFam" id="2.160.10.10:FF:000011">
    <property type="entry name" value="Bifunctional protein GlmU"/>
    <property type="match status" value="1"/>
</dbReference>
<dbReference type="FunFam" id="3.90.550.10:FF:000006">
    <property type="entry name" value="Bifunctional protein GlmU"/>
    <property type="match status" value="1"/>
</dbReference>
<dbReference type="Gene3D" id="2.160.10.10">
    <property type="entry name" value="Hexapeptide repeat proteins"/>
    <property type="match status" value="1"/>
</dbReference>
<dbReference type="Gene3D" id="3.90.550.10">
    <property type="entry name" value="Spore Coat Polysaccharide Biosynthesis Protein SpsA, Chain A"/>
    <property type="match status" value="1"/>
</dbReference>
<dbReference type="HAMAP" id="MF_01631">
    <property type="entry name" value="GlmU"/>
    <property type="match status" value="1"/>
</dbReference>
<dbReference type="InterPro" id="IPR005882">
    <property type="entry name" value="Bifunctional_GlmU"/>
</dbReference>
<dbReference type="InterPro" id="IPR050065">
    <property type="entry name" value="GlmU-like"/>
</dbReference>
<dbReference type="InterPro" id="IPR038009">
    <property type="entry name" value="GlmU_C_LbH"/>
</dbReference>
<dbReference type="InterPro" id="IPR001451">
    <property type="entry name" value="Hexapep"/>
</dbReference>
<dbReference type="InterPro" id="IPR018357">
    <property type="entry name" value="Hexapep_transf_CS"/>
</dbReference>
<dbReference type="InterPro" id="IPR025877">
    <property type="entry name" value="MobA-like_NTP_Trfase"/>
</dbReference>
<dbReference type="InterPro" id="IPR029044">
    <property type="entry name" value="Nucleotide-diphossugar_trans"/>
</dbReference>
<dbReference type="InterPro" id="IPR011004">
    <property type="entry name" value="Trimer_LpxA-like_sf"/>
</dbReference>
<dbReference type="NCBIfam" id="TIGR01173">
    <property type="entry name" value="glmU"/>
    <property type="match status" value="1"/>
</dbReference>
<dbReference type="NCBIfam" id="NF006986">
    <property type="entry name" value="PRK09451.1"/>
    <property type="match status" value="1"/>
</dbReference>
<dbReference type="PANTHER" id="PTHR43584:SF3">
    <property type="entry name" value="BIFUNCTIONAL PROTEIN GLMU"/>
    <property type="match status" value="1"/>
</dbReference>
<dbReference type="PANTHER" id="PTHR43584">
    <property type="entry name" value="NUCLEOTIDYL TRANSFERASE"/>
    <property type="match status" value="1"/>
</dbReference>
<dbReference type="Pfam" id="PF00132">
    <property type="entry name" value="Hexapep"/>
    <property type="match status" value="1"/>
</dbReference>
<dbReference type="Pfam" id="PF12804">
    <property type="entry name" value="NTP_transf_3"/>
    <property type="match status" value="1"/>
</dbReference>
<dbReference type="SUPFAM" id="SSF53448">
    <property type="entry name" value="Nucleotide-diphospho-sugar transferases"/>
    <property type="match status" value="1"/>
</dbReference>
<dbReference type="SUPFAM" id="SSF51161">
    <property type="entry name" value="Trimeric LpxA-like enzymes"/>
    <property type="match status" value="1"/>
</dbReference>
<dbReference type="PROSITE" id="PS00101">
    <property type="entry name" value="HEXAPEP_TRANSFERASES"/>
    <property type="match status" value="1"/>
</dbReference>
<reference key="1">
    <citation type="journal article" date="2008" name="J. Bacteriol.">
        <title>Insights into the environmental resistance gene pool from the genome sequence of the multidrug-resistant environmental isolate Escherichia coli SMS-3-5.</title>
        <authorList>
            <person name="Fricke W.F."/>
            <person name="Wright M.S."/>
            <person name="Lindell A.H."/>
            <person name="Harkins D.M."/>
            <person name="Baker-Austin C."/>
            <person name="Ravel J."/>
            <person name="Stepanauskas R."/>
        </authorList>
    </citation>
    <scope>NUCLEOTIDE SEQUENCE [LARGE SCALE GENOMIC DNA]</scope>
    <source>
        <strain>SMS-3-5 / SECEC</strain>
    </source>
</reference>
<organism>
    <name type="scientific">Escherichia coli (strain SMS-3-5 / SECEC)</name>
    <dbReference type="NCBI Taxonomy" id="439855"/>
    <lineage>
        <taxon>Bacteria</taxon>
        <taxon>Pseudomonadati</taxon>
        <taxon>Pseudomonadota</taxon>
        <taxon>Gammaproteobacteria</taxon>
        <taxon>Enterobacterales</taxon>
        <taxon>Enterobacteriaceae</taxon>
        <taxon>Escherichia</taxon>
    </lineage>
</organism>
<sequence>MLNNAMSVVILAAGKGTRMYSDLPKVLHTLAGKAMVQHVIDAANELGAAHVHLVYGHGGDLLKQALKDDNLNWVLQAEQLGTGHAMQQAAPFFADDEDILMLYGDVPLISVETLQRLRDAKPQGGIGLLTVKLDDPTGYGRITRENGKVTGIVEHKDATDEQRQIQEINTGILIANGADMKRWLAKLTNNNAQGEYYITDIIALAYQEGREIVAVHPQRLSEVEGVNNRLQLSRLERVYQSEQAEKLLLAGVMLRDPARFDLRGTLTHGRDVEIDTNVIIEGNVTLGHRVKIGTGCVIKNSVIGDDCEISPYTVVEDANLAAACTIGPFARLRPGAELLEGAHVGNFVEMKKARLGKGSKAGHLTYLGDAEIGDNVNIGAGTITCNYDGANKFKTIIGDDVFVGSDTQLVAPVTVGKGATIAAGTTVTRNVGENALAISRVPQTQKEGWRRPVKKK</sequence>
<name>GLMU_ECOSM</name>
<protein>
    <recommendedName>
        <fullName evidence="1">Bifunctional protein GlmU</fullName>
    </recommendedName>
    <domain>
        <recommendedName>
            <fullName evidence="1">UDP-N-acetylglucosamine pyrophosphorylase</fullName>
            <ecNumber evidence="1">2.7.7.23</ecNumber>
        </recommendedName>
        <alternativeName>
            <fullName evidence="1">N-acetylglucosamine-1-phosphate uridyltransferase</fullName>
        </alternativeName>
    </domain>
    <domain>
        <recommendedName>
            <fullName evidence="1">Glucosamine-1-phosphate N-acetyltransferase</fullName>
            <ecNumber evidence="1">2.3.1.157</ecNumber>
        </recommendedName>
    </domain>
</protein>
<gene>
    <name evidence="1" type="primary">glmU</name>
    <name type="ordered locus">EcSMS35_4098</name>
</gene>
<feature type="chain" id="PRO_1000186451" description="Bifunctional protein GlmU">
    <location>
        <begin position="1"/>
        <end position="456"/>
    </location>
</feature>
<feature type="region of interest" description="Pyrophosphorylase" evidence="1">
    <location>
        <begin position="1"/>
        <end position="229"/>
    </location>
</feature>
<feature type="region of interest" description="Linker" evidence="1">
    <location>
        <begin position="230"/>
        <end position="250"/>
    </location>
</feature>
<feature type="region of interest" description="N-acetyltransferase" evidence="1">
    <location>
        <begin position="251"/>
        <end position="456"/>
    </location>
</feature>
<feature type="active site" description="Proton acceptor" evidence="1">
    <location>
        <position position="363"/>
    </location>
</feature>
<feature type="binding site" evidence="1">
    <location>
        <begin position="11"/>
        <end position="14"/>
    </location>
    <ligand>
        <name>UDP-N-acetyl-alpha-D-glucosamine</name>
        <dbReference type="ChEBI" id="CHEBI:57705"/>
    </ligand>
</feature>
<feature type="binding site" evidence="1">
    <location>
        <position position="25"/>
    </location>
    <ligand>
        <name>UDP-N-acetyl-alpha-D-glucosamine</name>
        <dbReference type="ChEBI" id="CHEBI:57705"/>
    </ligand>
</feature>
<feature type="binding site" evidence="1">
    <location>
        <position position="76"/>
    </location>
    <ligand>
        <name>UDP-N-acetyl-alpha-D-glucosamine</name>
        <dbReference type="ChEBI" id="CHEBI:57705"/>
    </ligand>
</feature>
<feature type="binding site" evidence="1">
    <location>
        <begin position="81"/>
        <end position="82"/>
    </location>
    <ligand>
        <name>UDP-N-acetyl-alpha-D-glucosamine</name>
        <dbReference type="ChEBI" id="CHEBI:57705"/>
    </ligand>
</feature>
<feature type="binding site" evidence="1">
    <location>
        <begin position="103"/>
        <end position="105"/>
    </location>
    <ligand>
        <name>UDP-N-acetyl-alpha-D-glucosamine</name>
        <dbReference type="ChEBI" id="CHEBI:57705"/>
    </ligand>
</feature>
<feature type="binding site" evidence="1">
    <location>
        <position position="105"/>
    </location>
    <ligand>
        <name>Mg(2+)</name>
        <dbReference type="ChEBI" id="CHEBI:18420"/>
    </ligand>
</feature>
<feature type="binding site" evidence="1">
    <location>
        <position position="140"/>
    </location>
    <ligand>
        <name>UDP-N-acetyl-alpha-D-glucosamine</name>
        <dbReference type="ChEBI" id="CHEBI:57705"/>
    </ligand>
</feature>
<feature type="binding site" evidence="1">
    <location>
        <position position="154"/>
    </location>
    <ligand>
        <name>UDP-N-acetyl-alpha-D-glucosamine</name>
        <dbReference type="ChEBI" id="CHEBI:57705"/>
    </ligand>
</feature>
<feature type="binding site" evidence="1">
    <location>
        <position position="169"/>
    </location>
    <ligand>
        <name>UDP-N-acetyl-alpha-D-glucosamine</name>
        <dbReference type="ChEBI" id="CHEBI:57705"/>
    </ligand>
</feature>
<feature type="binding site" evidence="1">
    <location>
        <position position="227"/>
    </location>
    <ligand>
        <name>Mg(2+)</name>
        <dbReference type="ChEBI" id="CHEBI:18420"/>
    </ligand>
</feature>
<feature type="binding site" evidence="1">
    <location>
        <position position="227"/>
    </location>
    <ligand>
        <name>UDP-N-acetyl-alpha-D-glucosamine</name>
        <dbReference type="ChEBI" id="CHEBI:57705"/>
    </ligand>
</feature>
<feature type="binding site" evidence="1">
    <location>
        <position position="333"/>
    </location>
    <ligand>
        <name>UDP-N-acetyl-alpha-D-glucosamine</name>
        <dbReference type="ChEBI" id="CHEBI:57705"/>
    </ligand>
</feature>
<feature type="binding site" evidence="1">
    <location>
        <position position="351"/>
    </location>
    <ligand>
        <name>UDP-N-acetyl-alpha-D-glucosamine</name>
        <dbReference type="ChEBI" id="CHEBI:57705"/>
    </ligand>
</feature>
<feature type="binding site" evidence="1">
    <location>
        <position position="366"/>
    </location>
    <ligand>
        <name>UDP-N-acetyl-alpha-D-glucosamine</name>
        <dbReference type="ChEBI" id="CHEBI:57705"/>
    </ligand>
</feature>
<feature type="binding site" evidence="1">
    <location>
        <position position="377"/>
    </location>
    <ligand>
        <name>UDP-N-acetyl-alpha-D-glucosamine</name>
        <dbReference type="ChEBI" id="CHEBI:57705"/>
    </ligand>
</feature>
<feature type="binding site" evidence="1">
    <location>
        <position position="380"/>
    </location>
    <ligand>
        <name>acetyl-CoA</name>
        <dbReference type="ChEBI" id="CHEBI:57288"/>
    </ligand>
</feature>
<feature type="binding site" evidence="1">
    <location>
        <begin position="386"/>
        <end position="387"/>
    </location>
    <ligand>
        <name>acetyl-CoA</name>
        <dbReference type="ChEBI" id="CHEBI:57288"/>
    </ligand>
</feature>
<feature type="binding site" evidence="1">
    <location>
        <position position="405"/>
    </location>
    <ligand>
        <name>acetyl-CoA</name>
        <dbReference type="ChEBI" id="CHEBI:57288"/>
    </ligand>
</feature>
<feature type="binding site" evidence="1">
    <location>
        <position position="423"/>
    </location>
    <ligand>
        <name>acetyl-CoA</name>
        <dbReference type="ChEBI" id="CHEBI:57288"/>
    </ligand>
</feature>
<feature type="binding site" evidence="1">
    <location>
        <position position="440"/>
    </location>
    <ligand>
        <name>acetyl-CoA</name>
        <dbReference type="ChEBI" id="CHEBI:57288"/>
    </ligand>
</feature>